<accession>A4VRF7</accession>
<comment type="function">
    <text evidence="1">May play a key role in the regulation of the intracellular concentration of adenosylhomocysteine.</text>
</comment>
<comment type="catalytic activity">
    <reaction evidence="1">
        <text>S-adenosyl-L-homocysteine + H2O = L-homocysteine + adenosine</text>
        <dbReference type="Rhea" id="RHEA:21708"/>
        <dbReference type="ChEBI" id="CHEBI:15377"/>
        <dbReference type="ChEBI" id="CHEBI:16335"/>
        <dbReference type="ChEBI" id="CHEBI:57856"/>
        <dbReference type="ChEBI" id="CHEBI:58199"/>
        <dbReference type="EC" id="3.13.2.1"/>
    </reaction>
</comment>
<comment type="cofactor">
    <cofactor evidence="1">
        <name>NAD(+)</name>
        <dbReference type="ChEBI" id="CHEBI:57540"/>
    </cofactor>
    <text evidence="1">Binds 1 NAD(+) per subunit.</text>
</comment>
<comment type="pathway">
    <text evidence="1">Amino-acid biosynthesis; L-homocysteine biosynthesis; L-homocysteine from S-adenosyl-L-homocysteine: step 1/1.</text>
</comment>
<comment type="subcellular location">
    <subcellularLocation>
        <location evidence="1">Cytoplasm</location>
    </subcellularLocation>
</comment>
<comment type="similarity">
    <text evidence="1">Belongs to the adenosylhomocysteinase family.</text>
</comment>
<evidence type="ECO:0000255" key="1">
    <source>
        <dbReference type="HAMAP-Rule" id="MF_00563"/>
    </source>
</evidence>
<proteinExistence type="inferred from homology"/>
<gene>
    <name evidence="1" type="primary">ahcY</name>
    <name type="ordered locus">PST_3935</name>
</gene>
<dbReference type="EC" id="3.13.2.1" evidence="1"/>
<dbReference type="EMBL" id="CP000304">
    <property type="protein sequence ID" value="ABP81558.1"/>
    <property type="molecule type" value="Genomic_DNA"/>
</dbReference>
<dbReference type="RefSeq" id="WP_011914942.1">
    <property type="nucleotide sequence ID" value="NC_009434.1"/>
</dbReference>
<dbReference type="SMR" id="A4VRF7"/>
<dbReference type="GeneID" id="66823223"/>
<dbReference type="KEGG" id="psa:PST_3935"/>
<dbReference type="eggNOG" id="COG0499">
    <property type="taxonomic scope" value="Bacteria"/>
</dbReference>
<dbReference type="HOGENOM" id="CLU_025194_2_1_6"/>
<dbReference type="UniPathway" id="UPA00314">
    <property type="reaction ID" value="UER00076"/>
</dbReference>
<dbReference type="Proteomes" id="UP000000233">
    <property type="component" value="Chromosome"/>
</dbReference>
<dbReference type="GO" id="GO:0005829">
    <property type="term" value="C:cytosol"/>
    <property type="evidence" value="ECO:0007669"/>
    <property type="project" value="TreeGrafter"/>
</dbReference>
<dbReference type="GO" id="GO:0004013">
    <property type="term" value="F:adenosylhomocysteinase activity"/>
    <property type="evidence" value="ECO:0007669"/>
    <property type="project" value="UniProtKB-UniRule"/>
</dbReference>
<dbReference type="GO" id="GO:0071269">
    <property type="term" value="P:L-homocysteine biosynthetic process"/>
    <property type="evidence" value="ECO:0007669"/>
    <property type="project" value="UniProtKB-UniRule"/>
</dbReference>
<dbReference type="GO" id="GO:0006730">
    <property type="term" value="P:one-carbon metabolic process"/>
    <property type="evidence" value="ECO:0007669"/>
    <property type="project" value="UniProtKB-KW"/>
</dbReference>
<dbReference type="GO" id="GO:0033353">
    <property type="term" value="P:S-adenosylmethionine cycle"/>
    <property type="evidence" value="ECO:0007669"/>
    <property type="project" value="TreeGrafter"/>
</dbReference>
<dbReference type="CDD" id="cd00401">
    <property type="entry name" value="SAHH"/>
    <property type="match status" value="1"/>
</dbReference>
<dbReference type="FunFam" id="3.40.50.1480:FF:000006">
    <property type="entry name" value="Adenosylhomocysteinase"/>
    <property type="match status" value="1"/>
</dbReference>
<dbReference type="FunFam" id="3.40.50.1480:FF:000007">
    <property type="entry name" value="Adenosylhomocysteinase"/>
    <property type="match status" value="1"/>
</dbReference>
<dbReference type="Gene3D" id="3.40.50.1480">
    <property type="entry name" value="Adenosylhomocysteinase-like"/>
    <property type="match status" value="3"/>
</dbReference>
<dbReference type="Gene3D" id="3.40.50.720">
    <property type="entry name" value="NAD(P)-binding Rossmann-like Domain"/>
    <property type="match status" value="1"/>
</dbReference>
<dbReference type="HAMAP" id="MF_00563">
    <property type="entry name" value="AdoHcyase"/>
    <property type="match status" value="1"/>
</dbReference>
<dbReference type="InterPro" id="IPR042172">
    <property type="entry name" value="Adenosylhomocyst_ase-like_sf"/>
</dbReference>
<dbReference type="InterPro" id="IPR000043">
    <property type="entry name" value="Adenosylhomocysteinase-like"/>
</dbReference>
<dbReference type="InterPro" id="IPR015878">
    <property type="entry name" value="Ado_hCys_hydrolase_NAD-bd"/>
</dbReference>
<dbReference type="InterPro" id="IPR036291">
    <property type="entry name" value="NAD(P)-bd_dom_sf"/>
</dbReference>
<dbReference type="InterPro" id="IPR020082">
    <property type="entry name" value="S-Ado-L-homoCys_hydrolase_CS"/>
</dbReference>
<dbReference type="NCBIfam" id="TIGR00936">
    <property type="entry name" value="ahcY"/>
    <property type="match status" value="1"/>
</dbReference>
<dbReference type="NCBIfam" id="NF004005">
    <property type="entry name" value="PRK05476.2-3"/>
    <property type="match status" value="1"/>
</dbReference>
<dbReference type="PANTHER" id="PTHR23420">
    <property type="entry name" value="ADENOSYLHOMOCYSTEINASE"/>
    <property type="match status" value="1"/>
</dbReference>
<dbReference type="PANTHER" id="PTHR23420:SF0">
    <property type="entry name" value="ADENOSYLHOMOCYSTEINASE"/>
    <property type="match status" value="1"/>
</dbReference>
<dbReference type="Pfam" id="PF05221">
    <property type="entry name" value="AdoHcyase"/>
    <property type="match status" value="1"/>
</dbReference>
<dbReference type="Pfam" id="PF00670">
    <property type="entry name" value="AdoHcyase_NAD"/>
    <property type="match status" value="1"/>
</dbReference>
<dbReference type="PIRSF" id="PIRSF001109">
    <property type="entry name" value="Ad_hcy_hydrolase"/>
    <property type="match status" value="1"/>
</dbReference>
<dbReference type="SMART" id="SM00996">
    <property type="entry name" value="AdoHcyase"/>
    <property type="match status" value="1"/>
</dbReference>
<dbReference type="SMART" id="SM00997">
    <property type="entry name" value="AdoHcyase_NAD"/>
    <property type="match status" value="1"/>
</dbReference>
<dbReference type="SUPFAM" id="SSF52283">
    <property type="entry name" value="Formate/glycerate dehydrogenase catalytic domain-like"/>
    <property type="match status" value="1"/>
</dbReference>
<dbReference type="SUPFAM" id="SSF51735">
    <property type="entry name" value="NAD(P)-binding Rossmann-fold domains"/>
    <property type="match status" value="1"/>
</dbReference>
<dbReference type="PROSITE" id="PS00738">
    <property type="entry name" value="ADOHCYASE_1"/>
    <property type="match status" value="1"/>
</dbReference>
<dbReference type="PROSITE" id="PS00739">
    <property type="entry name" value="ADOHCYASE_2"/>
    <property type="match status" value="1"/>
</dbReference>
<protein>
    <recommendedName>
        <fullName evidence="1">Adenosylhomocysteinase</fullName>
        <ecNumber evidence="1">3.13.2.1</ecNumber>
    </recommendedName>
    <alternativeName>
        <fullName evidence="1">S-adenosyl-L-homocysteine hydrolase</fullName>
        <shortName evidence="1">AdoHcyase</shortName>
    </alternativeName>
</protein>
<keyword id="KW-0963">Cytoplasm</keyword>
<keyword id="KW-0378">Hydrolase</keyword>
<keyword id="KW-0520">NAD</keyword>
<keyword id="KW-0554">One-carbon metabolism</keyword>
<keyword id="KW-1185">Reference proteome</keyword>
<organism>
    <name type="scientific">Stutzerimonas stutzeri (strain A1501)</name>
    <name type="common">Pseudomonas stutzeri</name>
    <dbReference type="NCBI Taxonomy" id="379731"/>
    <lineage>
        <taxon>Bacteria</taxon>
        <taxon>Pseudomonadati</taxon>
        <taxon>Pseudomonadota</taxon>
        <taxon>Gammaproteobacteria</taxon>
        <taxon>Pseudomonadales</taxon>
        <taxon>Pseudomonadaceae</taxon>
        <taxon>Stutzerimonas</taxon>
    </lineage>
</organism>
<feature type="chain" id="PRO_1000024755" description="Adenosylhomocysteinase">
    <location>
        <begin position="1"/>
        <end position="468"/>
    </location>
</feature>
<feature type="binding site" evidence="1">
    <location>
        <position position="63"/>
    </location>
    <ligand>
        <name>substrate</name>
    </ligand>
</feature>
<feature type="binding site" evidence="1">
    <location>
        <position position="139"/>
    </location>
    <ligand>
        <name>substrate</name>
    </ligand>
</feature>
<feature type="binding site" evidence="1">
    <location>
        <position position="164"/>
    </location>
    <ligand>
        <name>substrate</name>
    </ligand>
</feature>
<feature type="binding site" evidence="1">
    <location>
        <begin position="165"/>
        <end position="167"/>
    </location>
    <ligand>
        <name>NAD(+)</name>
        <dbReference type="ChEBI" id="CHEBI:57540"/>
    </ligand>
</feature>
<feature type="binding site" evidence="1">
    <location>
        <position position="194"/>
    </location>
    <ligand>
        <name>substrate</name>
    </ligand>
</feature>
<feature type="binding site" evidence="1">
    <location>
        <position position="198"/>
    </location>
    <ligand>
        <name>substrate</name>
    </ligand>
</feature>
<feature type="binding site" evidence="1">
    <location>
        <position position="199"/>
    </location>
    <ligand>
        <name>NAD(+)</name>
        <dbReference type="ChEBI" id="CHEBI:57540"/>
    </ligand>
</feature>
<feature type="binding site" evidence="1">
    <location>
        <begin position="228"/>
        <end position="233"/>
    </location>
    <ligand>
        <name>NAD(+)</name>
        <dbReference type="ChEBI" id="CHEBI:57540"/>
    </ligand>
</feature>
<feature type="binding site" evidence="1">
    <location>
        <position position="251"/>
    </location>
    <ligand>
        <name>NAD(+)</name>
        <dbReference type="ChEBI" id="CHEBI:57540"/>
    </ligand>
</feature>
<feature type="binding site" evidence="1">
    <location>
        <position position="300"/>
    </location>
    <ligand>
        <name>NAD(+)</name>
        <dbReference type="ChEBI" id="CHEBI:57540"/>
    </ligand>
</feature>
<feature type="binding site" evidence="1">
    <location>
        <begin position="321"/>
        <end position="323"/>
    </location>
    <ligand>
        <name>NAD(+)</name>
        <dbReference type="ChEBI" id="CHEBI:57540"/>
    </ligand>
</feature>
<feature type="binding site" evidence="1">
    <location>
        <position position="374"/>
    </location>
    <ligand>
        <name>NAD(+)</name>
        <dbReference type="ChEBI" id="CHEBI:57540"/>
    </ligand>
</feature>
<reference key="1">
    <citation type="journal article" date="2008" name="Proc. Natl. Acad. Sci. U.S.A.">
        <title>Nitrogen fixation island and rhizosphere competence traits in the genome of root-associated Pseudomonas stutzeri A1501.</title>
        <authorList>
            <person name="Yan Y."/>
            <person name="Yang J."/>
            <person name="Dou Y."/>
            <person name="Chen M."/>
            <person name="Ping S."/>
            <person name="Peng J."/>
            <person name="Lu W."/>
            <person name="Zhang W."/>
            <person name="Yao Z."/>
            <person name="Li H."/>
            <person name="Liu W."/>
            <person name="He S."/>
            <person name="Geng L."/>
            <person name="Zhang X."/>
            <person name="Yang F."/>
            <person name="Yu H."/>
            <person name="Zhan Y."/>
            <person name="Li D."/>
            <person name="Lin Z."/>
            <person name="Wang Y."/>
            <person name="Elmerich C."/>
            <person name="Lin M."/>
            <person name="Jin Q."/>
        </authorList>
    </citation>
    <scope>NUCLEOTIDE SEQUENCE [LARGE SCALE GENOMIC DNA]</scope>
    <source>
        <strain>A1501</strain>
    </source>
</reference>
<name>SAHH_STUS1</name>
<sequence length="468" mass="51058">MSAVMTPAGFTDFKVADISLAAWGRREIIIAESEMPALMGLRRKYAAEQPLKGAKILGCIHMTIQTAVLIETLIALGAEVRWSSCNIFSTQDQAAAAIAAAGIPVFAWKGETEEEYEWCIEQTILKDGQPWDANMVLDDGGDLTQILHDKYPQVLERVHGITEETTTGVHRLLDMLKGGTLKVPAINVNDSVTKSKNDNKYGCRHSLNDAIKRATDHLLSGKQALVIGYGDVGKGSAQSLRQEGMIVKVSEVDPICAMQACMDGFELVSPYKNGINDGTEASVDAALLGKIDLIVTTTGNVNVCDAGMLKALKKRAVVCNIGHFDNEIDTAFMRQNWGWEEVKPQVHKIHRTGKTVDPTNDDYLILLAEGRLVNLGNATGHPSRIMDGSFANQVLAQIHLYNEKFADLPVAEKTQNVTVMVLPKKLDEEVALEMVKGFGGVVTQLTAKQAEYIGVAVEGPFKPDSYRY</sequence>